<dbReference type="EC" id="3.6.4.13"/>
<dbReference type="EMBL" id="CP017628">
    <property type="protein sequence ID" value="AOW30173.1"/>
    <property type="molecule type" value="Genomic_DNA"/>
</dbReference>
<dbReference type="RefSeq" id="XP_712520.2">
    <property type="nucleotide sequence ID" value="XM_707427.2"/>
</dbReference>
<dbReference type="SMR" id="Q59S59"/>
<dbReference type="FunCoup" id="Q59S59">
    <property type="interactions" value="146"/>
</dbReference>
<dbReference type="STRING" id="237561.Q59S59"/>
<dbReference type="EnsemblFungi" id="C6_02380W_A-T">
    <property type="protein sequence ID" value="C6_02380W_A-T-p1"/>
    <property type="gene ID" value="C6_02380W_A"/>
</dbReference>
<dbReference type="GeneID" id="3645883"/>
<dbReference type="KEGG" id="cal:CAALFM_C602380WA"/>
<dbReference type="CGD" id="CAL0000186407">
    <property type="gene designation" value="orf19.10985"/>
</dbReference>
<dbReference type="VEuPathDB" id="FungiDB:C6_02380W_A"/>
<dbReference type="eggNOG" id="KOG0335">
    <property type="taxonomic scope" value="Eukaryota"/>
</dbReference>
<dbReference type="HOGENOM" id="CLU_003041_18_0_1"/>
<dbReference type="InParanoid" id="Q59S59"/>
<dbReference type="OrthoDB" id="10256233at2759"/>
<dbReference type="PRO" id="PR:Q59S59"/>
<dbReference type="Proteomes" id="UP000000559">
    <property type="component" value="Chromosome 6"/>
</dbReference>
<dbReference type="GO" id="GO:0005739">
    <property type="term" value="C:mitochondrion"/>
    <property type="evidence" value="ECO:0007669"/>
    <property type="project" value="UniProtKB-SubCell"/>
</dbReference>
<dbReference type="GO" id="GO:0005730">
    <property type="term" value="C:nucleolus"/>
    <property type="evidence" value="ECO:0000318"/>
    <property type="project" value="GO_Central"/>
</dbReference>
<dbReference type="GO" id="GO:0005524">
    <property type="term" value="F:ATP binding"/>
    <property type="evidence" value="ECO:0007669"/>
    <property type="project" value="UniProtKB-KW"/>
</dbReference>
<dbReference type="GO" id="GO:0016887">
    <property type="term" value="F:ATP hydrolysis activity"/>
    <property type="evidence" value="ECO:0007669"/>
    <property type="project" value="RHEA"/>
</dbReference>
<dbReference type="GO" id="GO:0003723">
    <property type="term" value="F:RNA binding"/>
    <property type="evidence" value="ECO:0007669"/>
    <property type="project" value="UniProtKB-KW"/>
</dbReference>
<dbReference type="GO" id="GO:0003724">
    <property type="term" value="F:RNA helicase activity"/>
    <property type="evidence" value="ECO:0007669"/>
    <property type="project" value="UniProtKB-EC"/>
</dbReference>
<dbReference type="GO" id="GO:0000463">
    <property type="term" value="P:maturation of LSU-rRNA from tricistronic rRNA transcript (SSU-rRNA, 5.8S rRNA, LSU-rRNA)"/>
    <property type="evidence" value="ECO:0000318"/>
    <property type="project" value="GO_Central"/>
</dbReference>
<dbReference type="CDD" id="cd18787">
    <property type="entry name" value="SF2_C_DEAD"/>
    <property type="match status" value="1"/>
</dbReference>
<dbReference type="Gene3D" id="3.40.50.300">
    <property type="entry name" value="P-loop containing nucleotide triphosphate hydrolases"/>
    <property type="match status" value="2"/>
</dbReference>
<dbReference type="InterPro" id="IPR011545">
    <property type="entry name" value="DEAD/DEAH_box_helicase_dom"/>
</dbReference>
<dbReference type="InterPro" id="IPR014001">
    <property type="entry name" value="Helicase_ATP-bd"/>
</dbReference>
<dbReference type="InterPro" id="IPR001650">
    <property type="entry name" value="Helicase_C-like"/>
</dbReference>
<dbReference type="InterPro" id="IPR027417">
    <property type="entry name" value="P-loop_NTPase"/>
</dbReference>
<dbReference type="PANTHER" id="PTHR24031">
    <property type="entry name" value="RNA HELICASE"/>
    <property type="match status" value="1"/>
</dbReference>
<dbReference type="Pfam" id="PF00270">
    <property type="entry name" value="DEAD"/>
    <property type="match status" value="1"/>
</dbReference>
<dbReference type="Pfam" id="PF00271">
    <property type="entry name" value="Helicase_C"/>
    <property type="match status" value="1"/>
</dbReference>
<dbReference type="SMART" id="SM00487">
    <property type="entry name" value="DEXDc"/>
    <property type="match status" value="1"/>
</dbReference>
<dbReference type="SMART" id="SM00490">
    <property type="entry name" value="HELICc"/>
    <property type="match status" value="1"/>
</dbReference>
<dbReference type="SUPFAM" id="SSF52540">
    <property type="entry name" value="P-loop containing nucleoside triphosphate hydrolases"/>
    <property type="match status" value="1"/>
</dbReference>
<dbReference type="PROSITE" id="PS51192">
    <property type="entry name" value="HELICASE_ATP_BIND_1"/>
    <property type="match status" value="1"/>
</dbReference>
<dbReference type="PROSITE" id="PS51194">
    <property type="entry name" value="HELICASE_CTER"/>
    <property type="match status" value="1"/>
</dbReference>
<organism>
    <name type="scientific">Candida albicans (strain SC5314 / ATCC MYA-2876)</name>
    <name type="common">Yeast</name>
    <dbReference type="NCBI Taxonomy" id="237561"/>
    <lineage>
        <taxon>Eukaryota</taxon>
        <taxon>Fungi</taxon>
        <taxon>Dikarya</taxon>
        <taxon>Ascomycota</taxon>
        <taxon>Saccharomycotina</taxon>
        <taxon>Pichiomycetes</taxon>
        <taxon>Debaryomycetaceae</taxon>
        <taxon>Candida/Lodderomyces clade</taxon>
        <taxon>Candida</taxon>
    </lineage>
</organism>
<reference key="1">
    <citation type="journal article" date="2004" name="Proc. Natl. Acad. Sci. U.S.A.">
        <title>The diploid genome sequence of Candida albicans.</title>
        <authorList>
            <person name="Jones T."/>
            <person name="Federspiel N.A."/>
            <person name="Chibana H."/>
            <person name="Dungan J."/>
            <person name="Kalman S."/>
            <person name="Magee B.B."/>
            <person name="Newport G."/>
            <person name="Thorstenson Y.R."/>
            <person name="Agabian N."/>
            <person name="Magee P.T."/>
            <person name="Davis R.W."/>
            <person name="Scherer S."/>
        </authorList>
    </citation>
    <scope>NUCLEOTIDE SEQUENCE [LARGE SCALE GENOMIC DNA]</scope>
    <source>
        <strain>SC5314 / ATCC MYA-2876</strain>
    </source>
</reference>
<reference key="2">
    <citation type="journal article" date="2007" name="Genome Biol.">
        <title>Assembly of the Candida albicans genome into sixteen supercontigs aligned on the eight chromosomes.</title>
        <authorList>
            <person name="van het Hoog M."/>
            <person name="Rast T.J."/>
            <person name="Martchenko M."/>
            <person name="Grindle S."/>
            <person name="Dignard D."/>
            <person name="Hogues H."/>
            <person name="Cuomo C."/>
            <person name="Berriman M."/>
            <person name="Scherer S."/>
            <person name="Magee B.B."/>
            <person name="Whiteway M."/>
            <person name="Chibana H."/>
            <person name="Nantel A."/>
            <person name="Magee P.T."/>
        </authorList>
    </citation>
    <scope>GENOME REANNOTATION</scope>
    <source>
        <strain>SC5314 / ATCC MYA-2876</strain>
    </source>
</reference>
<reference key="3">
    <citation type="journal article" date="2013" name="Genome Biol.">
        <title>Assembly of a phased diploid Candida albicans genome facilitates allele-specific measurements and provides a simple model for repeat and indel structure.</title>
        <authorList>
            <person name="Muzzey D."/>
            <person name="Schwartz K."/>
            <person name="Weissman J.S."/>
            <person name="Sherlock G."/>
        </authorList>
    </citation>
    <scope>NUCLEOTIDE SEQUENCE [LARGE SCALE GENOMIC DNA]</scope>
    <scope>GENOME REANNOTATION</scope>
    <source>
        <strain>SC5314 / ATCC MYA-2876</strain>
    </source>
</reference>
<proteinExistence type="inferred from homology"/>
<comment type="function">
    <text evidence="1">ATP-binding RNA helicase involved in mitochondrial RNA metabolism. Required for maintenance of mitochondrial DNA (By similarity).</text>
</comment>
<comment type="catalytic activity">
    <reaction>
        <text>ATP + H2O = ADP + phosphate + H(+)</text>
        <dbReference type="Rhea" id="RHEA:13065"/>
        <dbReference type="ChEBI" id="CHEBI:15377"/>
        <dbReference type="ChEBI" id="CHEBI:15378"/>
        <dbReference type="ChEBI" id="CHEBI:30616"/>
        <dbReference type="ChEBI" id="CHEBI:43474"/>
        <dbReference type="ChEBI" id="CHEBI:456216"/>
        <dbReference type="EC" id="3.6.4.13"/>
    </reaction>
</comment>
<comment type="subcellular location">
    <subcellularLocation>
        <location evidence="1">Mitochondrion</location>
    </subcellularLocation>
</comment>
<comment type="domain">
    <text>The Q motif is unique to and characteristic of the DEAD box family of RNA helicases and controls ATP binding and hydrolysis.</text>
</comment>
<comment type="similarity">
    <text evidence="5">Belongs to the DEAD box helicase family. MRH4 subfamily.</text>
</comment>
<accession>Q59S59</accession>
<accession>A0A1D8PPW0</accession>
<sequence>MFKLLIPNKYNYVIRPLVRFKSIKSPKSPKPKPTAKLSPNVFSSGKFSQLHNDTSTTNIESKITSFDQLKIFPSVREAMIKEIKSQYNLKGPRHSNIDEIDIKPTPVQIAAIRKINQTRKLKVPNKDLEGMDDAERIQFELQNANEIQKTKVFTVAAETGSGKTWSYLAPLLSKLKSDDMEFWKSDPEGYDNTRKKGQFVKSVILLPTNELVDQVYETLQRANSFELDHKGAPGNFTSFLELPENKTMNITTMKLGQGEAPVRLFRQLETKGPIDVLITTPGKIVAFSKLVNINRPFRVFANVKYCVLDEADTLFDDSFEKNTTDVITHFPKLLDLILVSATIPKVFEKKLSKLFPDQRSLIRVATPSLHKVPRNIKVMTIDADVAPYNGSKPRCLAQALYAISKDGTEPGYVKRIIVFVNEKSEVDGIVESMITKYKVRPEDIVGVSGSVNIRDRKDMLQPFLQPAELIENDDFGSKVKILVTTDLLARGLNFQGVKNVILLGLPRNSVDLVHRLGRTGRMNQNGRVFVIVDKKSKKSWVKGLGNAIIRGLRIG</sequence>
<gene>
    <name type="primary">MRH4</name>
    <name type="ordered locus">CAALFM_C602380WA</name>
    <name type="ORF">CaO19.10985</name>
    <name type="ORF">CaO19.3481</name>
</gene>
<evidence type="ECO:0000250" key="1"/>
<evidence type="ECO:0000255" key="2"/>
<evidence type="ECO:0000255" key="3">
    <source>
        <dbReference type="PROSITE-ProRule" id="PRU00541"/>
    </source>
</evidence>
<evidence type="ECO:0000255" key="4">
    <source>
        <dbReference type="PROSITE-ProRule" id="PRU00542"/>
    </source>
</evidence>
<evidence type="ECO:0000305" key="5"/>
<keyword id="KW-0067">ATP-binding</keyword>
<keyword id="KW-0347">Helicase</keyword>
<keyword id="KW-0378">Hydrolase</keyword>
<keyword id="KW-0496">Mitochondrion</keyword>
<keyword id="KW-0547">Nucleotide-binding</keyword>
<keyword id="KW-1185">Reference proteome</keyword>
<keyword id="KW-0694">RNA-binding</keyword>
<keyword id="KW-0809">Transit peptide</keyword>
<name>MRH4_CANAL</name>
<feature type="transit peptide" description="Mitochondrion" evidence="2">
    <location>
        <begin position="1"/>
        <end position="25"/>
    </location>
</feature>
<feature type="chain" id="PRO_0000232350" description="ATP-dependent RNA helicase MRH4, mitochondrial">
    <location>
        <begin position="26"/>
        <end position="555"/>
    </location>
</feature>
<feature type="domain" description="Helicase ATP-binding" evidence="3">
    <location>
        <begin position="144"/>
        <end position="361"/>
    </location>
</feature>
<feature type="domain" description="Helicase C-terminal" evidence="4">
    <location>
        <begin position="395"/>
        <end position="555"/>
    </location>
</feature>
<feature type="short sequence motif" description="Q motif">
    <location>
        <begin position="101"/>
        <end position="108"/>
    </location>
</feature>
<feature type="short sequence motif" description="DEAD box">
    <location>
        <begin position="309"/>
        <end position="312"/>
    </location>
</feature>
<feature type="binding site" evidence="3">
    <location>
        <begin position="157"/>
        <end position="164"/>
    </location>
    <ligand>
        <name>ATP</name>
        <dbReference type="ChEBI" id="CHEBI:30616"/>
    </ligand>
</feature>
<protein>
    <recommendedName>
        <fullName>ATP-dependent RNA helicase MRH4, mitochondrial</fullName>
        <ecNumber>3.6.4.13</ecNumber>
    </recommendedName>
</protein>